<name>IF4G_WHEAT</name>
<feature type="chain" id="PRO_0000420547" description="Eukaryotic translation initiation factor 4G">
    <location>
        <begin position="1"/>
        <end position="1488"/>
    </location>
</feature>
<feature type="domain" description="MIF4G" evidence="2">
    <location>
        <begin position="883"/>
        <end position="1106"/>
    </location>
</feature>
<feature type="domain" description="MI" evidence="2">
    <location>
        <begin position="1299"/>
        <end position="1423"/>
    </location>
</feature>
<feature type="region of interest" description="Disordered" evidence="3">
    <location>
        <begin position="196"/>
        <end position="320"/>
    </location>
</feature>
<feature type="region of interest" description="Disordered" evidence="3">
    <location>
        <begin position="337"/>
        <end position="367"/>
    </location>
</feature>
<feature type="region of interest" description="Disordered" evidence="3">
    <location>
        <begin position="415"/>
        <end position="707"/>
    </location>
</feature>
<feature type="region of interest" description="EIF4E-binding">
    <location>
        <begin position="709"/>
        <end position="721"/>
    </location>
</feature>
<feature type="region of interest" description="Disordered" evidence="3">
    <location>
        <begin position="753"/>
        <end position="795"/>
    </location>
</feature>
<feature type="region of interest" description="Disordered" evidence="3">
    <location>
        <begin position="974"/>
        <end position="1000"/>
    </location>
</feature>
<feature type="region of interest" description="Disordered" evidence="3">
    <location>
        <begin position="1107"/>
        <end position="1299"/>
    </location>
</feature>
<feature type="compositionally biased region" description="Basic and acidic residues" evidence="3">
    <location>
        <begin position="216"/>
        <end position="244"/>
    </location>
</feature>
<feature type="compositionally biased region" description="Basic and acidic residues" evidence="3">
    <location>
        <begin position="274"/>
        <end position="299"/>
    </location>
</feature>
<feature type="compositionally biased region" description="Polar residues" evidence="3">
    <location>
        <begin position="300"/>
        <end position="310"/>
    </location>
</feature>
<feature type="compositionally biased region" description="Polar residues" evidence="3">
    <location>
        <begin position="345"/>
        <end position="360"/>
    </location>
</feature>
<feature type="compositionally biased region" description="Polar residues" evidence="3">
    <location>
        <begin position="448"/>
        <end position="464"/>
    </location>
</feature>
<feature type="compositionally biased region" description="Polar residues" evidence="3">
    <location>
        <begin position="473"/>
        <end position="495"/>
    </location>
</feature>
<feature type="compositionally biased region" description="Low complexity" evidence="3">
    <location>
        <begin position="496"/>
        <end position="520"/>
    </location>
</feature>
<feature type="compositionally biased region" description="Basic and acidic residues" evidence="3">
    <location>
        <begin position="555"/>
        <end position="566"/>
    </location>
</feature>
<feature type="compositionally biased region" description="Polar residues" evidence="3">
    <location>
        <begin position="627"/>
        <end position="646"/>
    </location>
</feature>
<feature type="compositionally biased region" description="Basic and acidic residues" evidence="3">
    <location>
        <begin position="651"/>
        <end position="671"/>
    </location>
</feature>
<feature type="compositionally biased region" description="Polar residues" evidence="3">
    <location>
        <begin position="683"/>
        <end position="696"/>
    </location>
</feature>
<feature type="compositionally biased region" description="Basic and acidic residues" evidence="3">
    <location>
        <begin position="753"/>
        <end position="784"/>
    </location>
</feature>
<feature type="compositionally biased region" description="Acidic residues" evidence="3">
    <location>
        <begin position="978"/>
        <end position="989"/>
    </location>
</feature>
<feature type="compositionally biased region" description="Basic and acidic residues" evidence="3">
    <location>
        <begin position="990"/>
        <end position="1000"/>
    </location>
</feature>
<feature type="compositionally biased region" description="Basic and acidic residues" evidence="3">
    <location>
        <begin position="1111"/>
        <end position="1132"/>
    </location>
</feature>
<feature type="compositionally biased region" description="Basic and acidic residues" evidence="3">
    <location>
        <begin position="1181"/>
        <end position="1191"/>
    </location>
</feature>
<feature type="compositionally biased region" description="Basic and acidic residues" evidence="3">
    <location>
        <begin position="1254"/>
        <end position="1267"/>
    </location>
</feature>
<feature type="compositionally biased region" description="Polar residues" evidence="3">
    <location>
        <begin position="1273"/>
        <end position="1294"/>
    </location>
</feature>
<sequence>MMHQGQTMMYPSVAHPIPPQLGNVNLNMASQYPQQQQNKLVAPRKSSNIKITDPNTNKEVVLGRPSPNVAAQPQQVSGVATQPMVYYTNPQQTSYNQSGTYYSGTAGVVPTGSQGRFGYPATQAGQSIPFMNPSMSNTVPASHKDNIAGPAPSGQSQLIGKPQGGLHMEKPVPSVKISMPAGRSDASKFRVADHAVQHRQKDNEVISGAMVSNKPVSEKESKAPSIPEKHSKESKAPSAVEKHPTAVTQPLPIQAAKPETDAATANSPSFLTGADEKKESLPMTDSLKDNKKNATRNDTKNLPQQPQSASPAEELKGQTSVKLGDDVVGHMETKSFDSEKVDLTSKVSGLTSATSESSISPILGKSEADSTSVNAADVPAMVISSAKLSSASTGEPQAVESLGVAAVKSKEIEITHQISPESSDGKIMSDSTENESHDFTVDLAEQASLATSKPGNSDATSFVTDPQELPKECTTSVPEDHSLMNTSHNKDTQTLSASVDASDVSEVNSGTSSESTSQSTNDKDIRSSIQETGLAVSGITPGMLPVNHSVASEGQVKHADGAKDESSTEQSSAVPTGSVRPLSREKPTAELARTKSTAGRKKKRKEMLSKADAAGSSDLYNAYKGPQEQSESVATSDGADSSSTVDGTHVLPEESEREVMCEDDGKKKVEPDDWEDAADMSTPKLQSSDSGNQASAVQLPDSDMTEANGRKKYSRDFLLTFAHQYSSLPVGIRMDTVTSTLFKDLAGKSYVIDREPHPSSARGSDRPTSRGDRRGPAMDDDKWLKSGVPYSPNRDAHMDLTNGPAINYRGGPGGAHGVLRNPRGALLVGPQSNAPQVPRSGSDADRWQQKGLIPSPVTPMQVMHKAEKKYVVGKVSDEEQAKQRQLKAILNKLTPQNFDKLFEQVKEVNIDNVSTLTGVISQIFDKALMEPTFCEMYANFCSHLAGALPDFSEDNEKITFKRLLLNKCQEEFERGEREEAEADKTEEEGEIKQTKEEREEKRVKARRRMLGNIRLIGELYKKRMLTERIMHECIKKLLGNYQNPDEENIEALCKLMSTIGEMIDHPKAKEHMDAYFDRMRNLSTSQLISSRVRFLLRDSIDLRKNKWQQRRKVDGPKKIDEVHRDAAQERHAQSSRSRGPVVSSLPRRGAPSMDYGSRGSAAPLVSPGPQQRGRGFGNQDIRYEQERHQFDRTVPLPQRSVKDEAITLGPQGGLARGMSLRGQPPVSNSELPSVVDQRRILSGPNGYNSVPSTTREDTSSRIPDRFSGRIATAAQSASSSHRPASQEGRSGNKSYSEEELREKSIATIREYYSAKDEKEVALCIEELNAPSFYPSLVSLWVNDSFERKDMERELLAKLFVGLYNGGYNLLSKPQLIEGLSSVLASLEDALSDSPRAAEYLGRLLARFVVEKILVLQDVGKLIEEGGEEPGHLVQEGIAADVLGAVLEWIRTEKGDSFLKEAKTSSNLKLEDFRPQHLKRSKLDAFMLT</sequence>
<evidence type="ECO:0000250" key="1"/>
<evidence type="ECO:0000255" key="2">
    <source>
        <dbReference type="PROSITE-ProRule" id="PRU00698"/>
    </source>
</evidence>
<evidence type="ECO:0000256" key="3">
    <source>
        <dbReference type="SAM" id="MobiDB-lite"/>
    </source>
</evidence>
<evidence type="ECO:0000269" key="4">
    <source>
    </source>
</evidence>
<evidence type="ECO:0000305" key="5"/>
<protein>
    <recommendedName>
        <fullName>Eukaryotic translation initiation factor 4G</fullName>
        <shortName>eIF-4G</shortName>
        <shortName>eIF4G</shortName>
    </recommendedName>
    <alternativeName>
        <fullName>Eukaryotic initiation factor 4F subunit p220</fullName>
        <shortName>eIF-4F p220 subunit</shortName>
    </alternativeName>
</protein>
<keyword id="KW-0396">Initiation factor</keyword>
<keyword id="KW-0648">Protein biosynthesis</keyword>
<keyword id="KW-1185">Reference proteome</keyword>
<keyword id="KW-0810">Translation regulation</keyword>
<accession>G5CEW6</accession>
<organism>
    <name type="scientific">Triticum aestivum</name>
    <name type="common">Wheat</name>
    <dbReference type="NCBI Taxonomy" id="4565"/>
    <lineage>
        <taxon>Eukaryota</taxon>
        <taxon>Viridiplantae</taxon>
        <taxon>Streptophyta</taxon>
        <taxon>Embryophyta</taxon>
        <taxon>Tracheophyta</taxon>
        <taxon>Spermatophyta</taxon>
        <taxon>Magnoliopsida</taxon>
        <taxon>Liliopsida</taxon>
        <taxon>Poales</taxon>
        <taxon>Poaceae</taxon>
        <taxon>BOP clade</taxon>
        <taxon>Pooideae</taxon>
        <taxon>Triticodae</taxon>
        <taxon>Triticeae</taxon>
        <taxon>Triticinae</taxon>
        <taxon>Triticum</taxon>
    </lineage>
</organism>
<proteinExistence type="evidence at protein level"/>
<comment type="function">
    <text evidence="1">Component of the protein complex eIF4F, which is involved in the recognition of the mRNA cap, ATP-dependent unwinding of 5'-terminal secondary structure and recruitment of mRNA to the ribosome.</text>
</comment>
<comment type="subunit">
    <text evidence="4">EIF4F is a multi-subunit complex, the composition of which varies with external and internal environmental conditions. It is composed of at least EIF4A, EIF4E and EIF4G. In higher plants two isoforms of EIF4F have been identified, named isoform EIF4F and isoform EIF(iso)4F. Isoform EIF4F has subunits p220 and p26, whereas isoform EIF(iso)4F has subunits p82 and p28.</text>
</comment>
<comment type="similarity">
    <text evidence="5">Belongs to the eukaryotic initiation factor 4G family.</text>
</comment>
<dbReference type="EMBL" id="JN091779">
    <property type="protein sequence ID" value="AEQ49596.1"/>
    <property type="molecule type" value="Genomic_DNA"/>
</dbReference>
<dbReference type="SMR" id="G5CEW6"/>
<dbReference type="STRING" id="4565.G5CEW6"/>
<dbReference type="PaxDb" id="4565-Traes_2BS_80474BB5B.1"/>
<dbReference type="eggNOG" id="KOG0401">
    <property type="taxonomic scope" value="Eukaryota"/>
</dbReference>
<dbReference type="Proteomes" id="UP000019116">
    <property type="component" value="Unplaced"/>
</dbReference>
<dbReference type="ExpressionAtlas" id="G5CEW6">
    <property type="expression patterns" value="baseline"/>
</dbReference>
<dbReference type="GO" id="GO:0016281">
    <property type="term" value="C:eukaryotic translation initiation factor 4F complex"/>
    <property type="evidence" value="ECO:0000318"/>
    <property type="project" value="GO_Central"/>
</dbReference>
<dbReference type="GO" id="GO:0003729">
    <property type="term" value="F:mRNA binding"/>
    <property type="evidence" value="ECO:0000318"/>
    <property type="project" value="GO_Central"/>
</dbReference>
<dbReference type="GO" id="GO:0003743">
    <property type="term" value="F:translation initiation factor activity"/>
    <property type="evidence" value="ECO:0000318"/>
    <property type="project" value="GO_Central"/>
</dbReference>
<dbReference type="GO" id="GO:0006417">
    <property type="term" value="P:regulation of translation"/>
    <property type="evidence" value="ECO:0007669"/>
    <property type="project" value="UniProtKB-KW"/>
</dbReference>
<dbReference type="GO" id="GO:0006413">
    <property type="term" value="P:translational initiation"/>
    <property type="evidence" value="ECO:0000318"/>
    <property type="project" value="GO_Central"/>
</dbReference>
<dbReference type="FunFam" id="1.25.40.180:FF:000024">
    <property type="entry name" value="Eukaryotic translation initiation factor 4G"/>
    <property type="match status" value="1"/>
</dbReference>
<dbReference type="FunFam" id="1.25.40.180:FF:000034">
    <property type="entry name" value="Eukaryotic translation initiation factor 4G"/>
    <property type="match status" value="1"/>
</dbReference>
<dbReference type="Gene3D" id="1.25.40.180">
    <property type="match status" value="2"/>
</dbReference>
<dbReference type="InterPro" id="IPR016024">
    <property type="entry name" value="ARM-type_fold"/>
</dbReference>
<dbReference type="InterPro" id="IPR003891">
    <property type="entry name" value="Initiation_fac_eIF4g_MI"/>
</dbReference>
<dbReference type="InterPro" id="IPR003890">
    <property type="entry name" value="MIF4G-like_typ-3"/>
</dbReference>
<dbReference type="PANTHER" id="PTHR23253">
    <property type="entry name" value="EUKARYOTIC TRANSLATION INITIATION FACTOR 4 GAMMA"/>
    <property type="match status" value="1"/>
</dbReference>
<dbReference type="PANTHER" id="PTHR23253:SF9">
    <property type="entry name" value="EUKARYOTIC TRANSLATION INITIATION FACTOR 4 GAMMA 2"/>
    <property type="match status" value="1"/>
</dbReference>
<dbReference type="Pfam" id="PF02847">
    <property type="entry name" value="MA3"/>
    <property type="match status" value="1"/>
</dbReference>
<dbReference type="Pfam" id="PF02854">
    <property type="entry name" value="MIF4G"/>
    <property type="match status" value="1"/>
</dbReference>
<dbReference type="SMART" id="SM00544">
    <property type="entry name" value="MA3"/>
    <property type="match status" value="1"/>
</dbReference>
<dbReference type="SMART" id="SM00543">
    <property type="entry name" value="MIF4G"/>
    <property type="match status" value="1"/>
</dbReference>
<dbReference type="SUPFAM" id="SSF48371">
    <property type="entry name" value="ARM repeat"/>
    <property type="match status" value="2"/>
</dbReference>
<dbReference type="PROSITE" id="PS51366">
    <property type="entry name" value="MI"/>
    <property type="match status" value="1"/>
</dbReference>
<reference key="1">
    <citation type="journal article" date="2011" name="J. Biol. Chem.">
        <title>Plant cap-binding complexes eukaryotic initiation factors eIF4F and eIFiso4F: molecular specificity of subunit binding.</title>
        <authorList>
            <person name="Mayberry L.K."/>
            <person name="Allen M.L."/>
            <person name="Nitka K.R."/>
            <person name="Campbell L."/>
            <person name="Murphy P.A."/>
            <person name="Browning K.S."/>
        </authorList>
    </citation>
    <scope>NUCLEOTIDE SEQUENCE [GENOMIC DNA]</scope>
    <scope>SUBUNIT</scope>
</reference>